<reference key="1">
    <citation type="journal article" date="2006" name="PLoS Biol.">
        <title>Metabolic complementarity and genomics of the dual bacterial symbiosis of sharpshooters.</title>
        <authorList>
            <person name="Wu D."/>
            <person name="Daugherty S.C."/>
            <person name="Van Aken S.E."/>
            <person name="Pai G.H."/>
            <person name="Watkins K.L."/>
            <person name="Khouri H."/>
            <person name="Tallon L.J."/>
            <person name="Zaborsky J.M."/>
            <person name="Dunbar H.E."/>
            <person name="Tran P.L."/>
            <person name="Moran N.A."/>
            <person name="Eisen J.A."/>
        </authorList>
    </citation>
    <scope>NUCLEOTIDE SEQUENCE [LARGE SCALE GENOMIC DNA]</scope>
</reference>
<proteinExistence type="inferred from homology"/>
<accession>Q1LTX2</accession>
<feature type="chain" id="PRO_0000332794" description="Cysteine--tRNA ligase">
    <location>
        <begin position="1"/>
        <end position="462"/>
    </location>
</feature>
<feature type="short sequence motif" description="'HIGH' region">
    <location>
        <begin position="30"/>
        <end position="40"/>
    </location>
</feature>
<feature type="short sequence motif" description="'KMSKS' region">
    <location>
        <begin position="266"/>
        <end position="270"/>
    </location>
</feature>
<feature type="binding site" evidence="1">
    <location>
        <position position="28"/>
    </location>
    <ligand>
        <name>Zn(2+)</name>
        <dbReference type="ChEBI" id="CHEBI:29105"/>
    </ligand>
</feature>
<feature type="binding site" evidence="1">
    <location>
        <position position="209"/>
    </location>
    <ligand>
        <name>Zn(2+)</name>
        <dbReference type="ChEBI" id="CHEBI:29105"/>
    </ligand>
</feature>
<feature type="binding site" evidence="1">
    <location>
        <position position="234"/>
    </location>
    <ligand>
        <name>Zn(2+)</name>
        <dbReference type="ChEBI" id="CHEBI:29105"/>
    </ligand>
</feature>
<feature type="binding site" evidence="1">
    <location>
        <position position="238"/>
    </location>
    <ligand>
        <name>Zn(2+)</name>
        <dbReference type="ChEBI" id="CHEBI:29105"/>
    </ligand>
</feature>
<feature type="binding site" evidence="1">
    <location>
        <position position="269"/>
    </location>
    <ligand>
        <name>ATP</name>
        <dbReference type="ChEBI" id="CHEBI:30616"/>
    </ligand>
</feature>
<gene>
    <name evidence="1" type="primary">cysS</name>
    <name type="ordered locus">BCI_0121</name>
</gene>
<sequence>MLAIFNTLTNKKEIFKPIHIGKVALYVCGVTAYDLCHIGHVRTFVTFDVVIRYLRYCGYEVNYIRNITDIEDKIIRKAANNGESCQQLTDRMIAEMHHDLDLLNILRPDKEPRATQHIKEIIQLTRQLIDKEHAYIASNGDVMFAIESANNYGILSSQNLNQLQIGQRVKITTVKRNPMDFVLWKMSKHGEPTWSSPWGNGRPGWHIECSAMSIKYLGKHFDIHGGGSDLIFPHHENEIAQSTCMENNPYVNFWMHSGMVTICNEKMSKSLSNFFTVRDVLKYYDAETVRYFLISSHYRKPLNYSEKSLQLARTALKSLYIALRNTKKEVIPSGGEYFIEQFMMAMNNDFNTPAAHAVLFQLAHEVNRLKTKNIKSAQGMAATLRYLANILGLLEQDPEVFLQKQKIVTDLNIALIEELVKQRNNIRKKHQWVQADKVREKLAAMGIVLEDTPQGTIWRRSF</sequence>
<keyword id="KW-0030">Aminoacyl-tRNA synthetase</keyword>
<keyword id="KW-0067">ATP-binding</keyword>
<keyword id="KW-0963">Cytoplasm</keyword>
<keyword id="KW-0436">Ligase</keyword>
<keyword id="KW-0479">Metal-binding</keyword>
<keyword id="KW-0547">Nucleotide-binding</keyword>
<keyword id="KW-0648">Protein biosynthesis</keyword>
<keyword id="KW-1185">Reference proteome</keyword>
<keyword id="KW-0862">Zinc</keyword>
<dbReference type="EC" id="6.1.1.16" evidence="1"/>
<dbReference type="EMBL" id="CP000238">
    <property type="protein sequence ID" value="ABF13873.1"/>
    <property type="molecule type" value="Genomic_DNA"/>
</dbReference>
<dbReference type="RefSeq" id="WP_011520325.1">
    <property type="nucleotide sequence ID" value="NC_007984.1"/>
</dbReference>
<dbReference type="SMR" id="Q1LTX2"/>
<dbReference type="STRING" id="374463.BCI_0121"/>
<dbReference type="KEGG" id="bci:BCI_0121"/>
<dbReference type="HOGENOM" id="CLU_013528_0_1_6"/>
<dbReference type="OrthoDB" id="9815130at2"/>
<dbReference type="Proteomes" id="UP000002427">
    <property type="component" value="Chromosome"/>
</dbReference>
<dbReference type="GO" id="GO:0005829">
    <property type="term" value="C:cytosol"/>
    <property type="evidence" value="ECO:0007669"/>
    <property type="project" value="TreeGrafter"/>
</dbReference>
<dbReference type="GO" id="GO:0005524">
    <property type="term" value="F:ATP binding"/>
    <property type="evidence" value="ECO:0007669"/>
    <property type="project" value="UniProtKB-UniRule"/>
</dbReference>
<dbReference type="GO" id="GO:0004817">
    <property type="term" value="F:cysteine-tRNA ligase activity"/>
    <property type="evidence" value="ECO:0007669"/>
    <property type="project" value="UniProtKB-UniRule"/>
</dbReference>
<dbReference type="GO" id="GO:0008270">
    <property type="term" value="F:zinc ion binding"/>
    <property type="evidence" value="ECO:0007669"/>
    <property type="project" value="UniProtKB-UniRule"/>
</dbReference>
<dbReference type="GO" id="GO:0006423">
    <property type="term" value="P:cysteinyl-tRNA aminoacylation"/>
    <property type="evidence" value="ECO:0007669"/>
    <property type="project" value="UniProtKB-UniRule"/>
</dbReference>
<dbReference type="CDD" id="cd07963">
    <property type="entry name" value="Anticodon_Ia_Cys"/>
    <property type="match status" value="1"/>
</dbReference>
<dbReference type="CDD" id="cd00672">
    <property type="entry name" value="CysRS_core"/>
    <property type="match status" value="1"/>
</dbReference>
<dbReference type="FunFam" id="3.40.50.620:FF:000009">
    <property type="entry name" value="Cysteine--tRNA ligase"/>
    <property type="match status" value="1"/>
</dbReference>
<dbReference type="Gene3D" id="1.20.120.1910">
    <property type="entry name" value="Cysteine-tRNA ligase, C-terminal anti-codon recognition domain"/>
    <property type="match status" value="1"/>
</dbReference>
<dbReference type="Gene3D" id="3.40.50.620">
    <property type="entry name" value="HUPs"/>
    <property type="match status" value="1"/>
</dbReference>
<dbReference type="HAMAP" id="MF_00041">
    <property type="entry name" value="Cys_tRNA_synth"/>
    <property type="match status" value="1"/>
</dbReference>
<dbReference type="InterPro" id="IPR015803">
    <property type="entry name" value="Cys-tRNA-ligase"/>
</dbReference>
<dbReference type="InterPro" id="IPR015273">
    <property type="entry name" value="Cys-tRNA-synt_Ia_DALR"/>
</dbReference>
<dbReference type="InterPro" id="IPR024909">
    <property type="entry name" value="Cys-tRNA/MSH_ligase"/>
</dbReference>
<dbReference type="InterPro" id="IPR056411">
    <property type="entry name" value="CysS_C"/>
</dbReference>
<dbReference type="InterPro" id="IPR014729">
    <property type="entry name" value="Rossmann-like_a/b/a_fold"/>
</dbReference>
<dbReference type="InterPro" id="IPR032678">
    <property type="entry name" value="tRNA-synt_1_cat_dom"/>
</dbReference>
<dbReference type="InterPro" id="IPR009080">
    <property type="entry name" value="tRNAsynth_Ia_anticodon-bd"/>
</dbReference>
<dbReference type="NCBIfam" id="TIGR00435">
    <property type="entry name" value="cysS"/>
    <property type="match status" value="1"/>
</dbReference>
<dbReference type="PANTHER" id="PTHR10890:SF3">
    <property type="entry name" value="CYSTEINE--TRNA LIGASE, CYTOPLASMIC"/>
    <property type="match status" value="1"/>
</dbReference>
<dbReference type="PANTHER" id="PTHR10890">
    <property type="entry name" value="CYSTEINYL-TRNA SYNTHETASE"/>
    <property type="match status" value="1"/>
</dbReference>
<dbReference type="Pfam" id="PF23493">
    <property type="entry name" value="CysS_C"/>
    <property type="match status" value="1"/>
</dbReference>
<dbReference type="Pfam" id="PF09190">
    <property type="entry name" value="DALR_2"/>
    <property type="match status" value="1"/>
</dbReference>
<dbReference type="Pfam" id="PF01406">
    <property type="entry name" value="tRNA-synt_1e"/>
    <property type="match status" value="1"/>
</dbReference>
<dbReference type="PRINTS" id="PR00983">
    <property type="entry name" value="TRNASYNTHCYS"/>
</dbReference>
<dbReference type="SMART" id="SM00840">
    <property type="entry name" value="DALR_2"/>
    <property type="match status" value="1"/>
</dbReference>
<dbReference type="SUPFAM" id="SSF47323">
    <property type="entry name" value="Anticodon-binding domain of a subclass of class I aminoacyl-tRNA synthetases"/>
    <property type="match status" value="1"/>
</dbReference>
<dbReference type="SUPFAM" id="SSF52374">
    <property type="entry name" value="Nucleotidylyl transferase"/>
    <property type="match status" value="1"/>
</dbReference>
<name>SYC_BAUCH</name>
<evidence type="ECO:0000255" key="1">
    <source>
        <dbReference type="HAMAP-Rule" id="MF_00041"/>
    </source>
</evidence>
<organism>
    <name type="scientific">Baumannia cicadellinicola subsp. Homalodisca coagulata</name>
    <dbReference type="NCBI Taxonomy" id="374463"/>
    <lineage>
        <taxon>Bacteria</taxon>
        <taxon>Pseudomonadati</taxon>
        <taxon>Pseudomonadota</taxon>
        <taxon>Gammaproteobacteria</taxon>
        <taxon>Candidatus Palibaumannia</taxon>
    </lineage>
</organism>
<protein>
    <recommendedName>
        <fullName evidence="1">Cysteine--tRNA ligase</fullName>
        <ecNumber evidence="1">6.1.1.16</ecNumber>
    </recommendedName>
    <alternativeName>
        <fullName evidence="1">Cysteinyl-tRNA synthetase</fullName>
        <shortName evidence="1">CysRS</shortName>
    </alternativeName>
</protein>
<comment type="catalytic activity">
    <reaction evidence="1">
        <text>tRNA(Cys) + L-cysteine + ATP = L-cysteinyl-tRNA(Cys) + AMP + diphosphate</text>
        <dbReference type="Rhea" id="RHEA:17773"/>
        <dbReference type="Rhea" id="RHEA-COMP:9661"/>
        <dbReference type="Rhea" id="RHEA-COMP:9679"/>
        <dbReference type="ChEBI" id="CHEBI:30616"/>
        <dbReference type="ChEBI" id="CHEBI:33019"/>
        <dbReference type="ChEBI" id="CHEBI:35235"/>
        <dbReference type="ChEBI" id="CHEBI:78442"/>
        <dbReference type="ChEBI" id="CHEBI:78517"/>
        <dbReference type="ChEBI" id="CHEBI:456215"/>
        <dbReference type="EC" id="6.1.1.16"/>
    </reaction>
</comment>
<comment type="cofactor">
    <cofactor evidence="1">
        <name>Zn(2+)</name>
        <dbReference type="ChEBI" id="CHEBI:29105"/>
    </cofactor>
    <text evidence="1">Binds 1 zinc ion per subunit.</text>
</comment>
<comment type="subunit">
    <text evidence="1">Monomer.</text>
</comment>
<comment type="subcellular location">
    <subcellularLocation>
        <location evidence="1">Cytoplasm</location>
    </subcellularLocation>
</comment>
<comment type="similarity">
    <text evidence="1">Belongs to the class-I aminoacyl-tRNA synthetase family.</text>
</comment>